<sequence length="159" mass="18279">MKITILAVGKLKEKYWKQAIAEYQKRLGAYTKIEIIEVPDEKAPENMSDKEVEQVKEKEGQRLLAKIKPQSTVITLEIQGNMLTSEGLAKNLQQRMVQGQSDFTFVIGGSNGLHQDVLDRSNYALSFSKMTFPHQMMRVILLEQVYRAFKIMRGEAYHK</sequence>
<gene>
    <name evidence="1" type="primary">rlmH</name>
    <name type="ordered locus">Sca_2451</name>
</gene>
<feature type="chain" id="PRO_1000199829" description="Ribosomal RNA large subunit methyltransferase H">
    <location>
        <begin position="1"/>
        <end position="159"/>
    </location>
</feature>
<feature type="binding site" evidence="1">
    <location>
        <position position="76"/>
    </location>
    <ligand>
        <name>S-adenosyl-L-methionine</name>
        <dbReference type="ChEBI" id="CHEBI:59789"/>
    </ligand>
</feature>
<feature type="binding site" evidence="1">
    <location>
        <position position="108"/>
    </location>
    <ligand>
        <name>S-adenosyl-L-methionine</name>
        <dbReference type="ChEBI" id="CHEBI:59789"/>
    </ligand>
</feature>
<feature type="binding site" evidence="1">
    <location>
        <begin position="127"/>
        <end position="132"/>
    </location>
    <ligand>
        <name>S-adenosyl-L-methionine</name>
        <dbReference type="ChEBI" id="CHEBI:59789"/>
    </ligand>
</feature>
<organism>
    <name type="scientific">Staphylococcus carnosus (strain TM300)</name>
    <dbReference type="NCBI Taxonomy" id="396513"/>
    <lineage>
        <taxon>Bacteria</taxon>
        <taxon>Bacillati</taxon>
        <taxon>Bacillota</taxon>
        <taxon>Bacilli</taxon>
        <taxon>Bacillales</taxon>
        <taxon>Staphylococcaceae</taxon>
        <taxon>Staphylococcus</taxon>
    </lineage>
</organism>
<comment type="function">
    <text evidence="1">Specifically methylates the pseudouridine at position 1915 (m3Psi1915) in 23S rRNA.</text>
</comment>
<comment type="catalytic activity">
    <reaction evidence="1">
        <text>pseudouridine(1915) in 23S rRNA + S-adenosyl-L-methionine = N(3)-methylpseudouridine(1915) in 23S rRNA + S-adenosyl-L-homocysteine + H(+)</text>
        <dbReference type="Rhea" id="RHEA:42752"/>
        <dbReference type="Rhea" id="RHEA-COMP:10221"/>
        <dbReference type="Rhea" id="RHEA-COMP:10222"/>
        <dbReference type="ChEBI" id="CHEBI:15378"/>
        <dbReference type="ChEBI" id="CHEBI:57856"/>
        <dbReference type="ChEBI" id="CHEBI:59789"/>
        <dbReference type="ChEBI" id="CHEBI:65314"/>
        <dbReference type="ChEBI" id="CHEBI:74486"/>
        <dbReference type="EC" id="2.1.1.177"/>
    </reaction>
</comment>
<comment type="subunit">
    <text evidence="1">Homodimer.</text>
</comment>
<comment type="subcellular location">
    <subcellularLocation>
        <location evidence="1">Cytoplasm</location>
    </subcellularLocation>
</comment>
<comment type="similarity">
    <text evidence="1">Belongs to the RNA methyltransferase RlmH family.</text>
</comment>
<protein>
    <recommendedName>
        <fullName evidence="1">Ribosomal RNA large subunit methyltransferase H</fullName>
        <ecNumber evidence="1">2.1.1.177</ecNumber>
    </recommendedName>
    <alternativeName>
        <fullName evidence="1">23S rRNA (pseudouridine1915-N3)-methyltransferase</fullName>
    </alternativeName>
    <alternativeName>
        <fullName evidence="1">23S rRNA m3Psi1915 methyltransferase</fullName>
    </alternativeName>
    <alternativeName>
        <fullName evidence="1">rRNA (pseudouridine-N3-)-methyltransferase RlmH</fullName>
    </alternativeName>
</protein>
<proteinExistence type="inferred from homology"/>
<accession>B9DID6</accession>
<evidence type="ECO:0000255" key="1">
    <source>
        <dbReference type="HAMAP-Rule" id="MF_00658"/>
    </source>
</evidence>
<dbReference type="EC" id="2.1.1.177" evidence="1"/>
<dbReference type="EMBL" id="AM295250">
    <property type="protein sequence ID" value="CAL29354.1"/>
    <property type="molecule type" value="Genomic_DNA"/>
</dbReference>
<dbReference type="RefSeq" id="WP_015901689.1">
    <property type="nucleotide sequence ID" value="NC_012121.1"/>
</dbReference>
<dbReference type="SMR" id="B9DID6"/>
<dbReference type="GeneID" id="93794891"/>
<dbReference type="KEGG" id="sca:SCA_2451"/>
<dbReference type="eggNOG" id="COG1576">
    <property type="taxonomic scope" value="Bacteria"/>
</dbReference>
<dbReference type="HOGENOM" id="CLU_100552_0_0_9"/>
<dbReference type="OrthoDB" id="9806643at2"/>
<dbReference type="BioCyc" id="SCAR396513:SCA_RS12310-MONOMER"/>
<dbReference type="Proteomes" id="UP000000444">
    <property type="component" value="Chromosome"/>
</dbReference>
<dbReference type="GO" id="GO:0005737">
    <property type="term" value="C:cytoplasm"/>
    <property type="evidence" value="ECO:0007669"/>
    <property type="project" value="UniProtKB-SubCell"/>
</dbReference>
<dbReference type="GO" id="GO:0070038">
    <property type="term" value="F:rRNA (pseudouridine-N3-)-methyltransferase activity"/>
    <property type="evidence" value="ECO:0007669"/>
    <property type="project" value="UniProtKB-UniRule"/>
</dbReference>
<dbReference type="CDD" id="cd18081">
    <property type="entry name" value="RlmH-like"/>
    <property type="match status" value="1"/>
</dbReference>
<dbReference type="Gene3D" id="3.40.1280.10">
    <property type="match status" value="1"/>
</dbReference>
<dbReference type="HAMAP" id="MF_00658">
    <property type="entry name" value="23SrRNA_methyltr_H"/>
    <property type="match status" value="1"/>
</dbReference>
<dbReference type="InterPro" id="IPR029028">
    <property type="entry name" value="Alpha/beta_knot_MTases"/>
</dbReference>
<dbReference type="InterPro" id="IPR003742">
    <property type="entry name" value="RlmH-like"/>
</dbReference>
<dbReference type="InterPro" id="IPR029026">
    <property type="entry name" value="tRNA_m1G_MTases_N"/>
</dbReference>
<dbReference type="NCBIfam" id="NF000985">
    <property type="entry name" value="PRK00103.1-3"/>
    <property type="match status" value="1"/>
</dbReference>
<dbReference type="NCBIfam" id="NF000986">
    <property type="entry name" value="PRK00103.1-4"/>
    <property type="match status" value="1"/>
</dbReference>
<dbReference type="NCBIfam" id="TIGR00246">
    <property type="entry name" value="tRNA_RlmH_YbeA"/>
    <property type="match status" value="1"/>
</dbReference>
<dbReference type="PANTHER" id="PTHR33603">
    <property type="entry name" value="METHYLTRANSFERASE"/>
    <property type="match status" value="1"/>
</dbReference>
<dbReference type="PANTHER" id="PTHR33603:SF1">
    <property type="entry name" value="RIBOSOMAL RNA LARGE SUBUNIT METHYLTRANSFERASE H"/>
    <property type="match status" value="1"/>
</dbReference>
<dbReference type="Pfam" id="PF02590">
    <property type="entry name" value="SPOUT_MTase"/>
    <property type="match status" value="1"/>
</dbReference>
<dbReference type="PIRSF" id="PIRSF004505">
    <property type="entry name" value="MT_bac"/>
    <property type="match status" value="1"/>
</dbReference>
<dbReference type="SUPFAM" id="SSF75217">
    <property type="entry name" value="alpha/beta knot"/>
    <property type="match status" value="1"/>
</dbReference>
<reference key="1">
    <citation type="journal article" date="2009" name="Appl. Environ. Microbiol.">
        <title>Genome analysis of the meat starter culture bacterium Staphylococcus carnosus TM300.</title>
        <authorList>
            <person name="Rosenstein R."/>
            <person name="Nerz C."/>
            <person name="Biswas L."/>
            <person name="Resch A."/>
            <person name="Raddatz G."/>
            <person name="Schuster S.C."/>
            <person name="Goetz F."/>
        </authorList>
    </citation>
    <scope>NUCLEOTIDE SEQUENCE [LARGE SCALE GENOMIC DNA]</scope>
    <source>
        <strain>TM300</strain>
    </source>
</reference>
<keyword id="KW-0963">Cytoplasm</keyword>
<keyword id="KW-0489">Methyltransferase</keyword>
<keyword id="KW-1185">Reference proteome</keyword>
<keyword id="KW-0698">rRNA processing</keyword>
<keyword id="KW-0949">S-adenosyl-L-methionine</keyword>
<keyword id="KW-0808">Transferase</keyword>
<name>RLMH_STACT</name>